<sequence length="252" mass="27878">MSLLTEVETYVLSIVPSGPLKAEIAQRLEDVFAGKNTDLEALMEWLKTRPILSPLTKGILGFVFTLTVPSERGLQRRRFVQNALNGNGDPNNMDRAVKLYRKLKREITFHGAKEIALSYSAGALASCMGLIYNRMGAVTTEVAFGLVCATCEQIADSQHRSHRQMVATTNPLIRHENRMVLASTTAKAMEQMAGSSEQAAEAMEIASQARQMVQAMRAIGTHPSSSTGLKDDLLENLQTYQKRMGVQMQRFK</sequence>
<organism>
    <name type="scientific">Influenza A virus (strain A/Beijing/353/1989 H3N2)</name>
    <dbReference type="NCBI Taxonomy" id="380949"/>
    <lineage>
        <taxon>Viruses</taxon>
        <taxon>Riboviria</taxon>
        <taxon>Orthornavirae</taxon>
        <taxon>Negarnaviricota</taxon>
        <taxon>Polyploviricotina</taxon>
        <taxon>Insthoviricetes</taxon>
        <taxon>Articulavirales</taxon>
        <taxon>Orthomyxoviridae</taxon>
        <taxon>Alphainfluenzavirus</taxon>
        <taxon>Alphainfluenzavirus influenzae</taxon>
        <taxon>Influenza A virus</taxon>
    </lineage>
</organism>
<evidence type="ECO:0000255" key="1">
    <source>
        <dbReference type="HAMAP-Rule" id="MF_04068"/>
    </source>
</evidence>
<keyword id="KW-0025">Alternative splicing</keyword>
<keyword id="KW-1048">Host nucleus</keyword>
<keyword id="KW-0472">Membrane</keyword>
<keyword id="KW-0694">RNA-binding</keyword>
<keyword id="KW-0468">Viral matrix protein</keyword>
<keyword id="KW-0946">Virion</keyword>
<organismHost>
    <name type="scientific">Aves</name>
    <dbReference type="NCBI Taxonomy" id="8782"/>
</organismHost>
<organismHost>
    <name type="scientific">Cetacea</name>
    <name type="common">whales</name>
    <dbReference type="NCBI Taxonomy" id="9721"/>
</organismHost>
<organismHost>
    <name type="scientific">Homo sapiens</name>
    <name type="common">Human</name>
    <dbReference type="NCBI Taxonomy" id="9606"/>
</organismHost>
<organismHost>
    <name type="scientific">Phocidae</name>
    <name type="common">true seals</name>
    <dbReference type="NCBI Taxonomy" id="9709"/>
</organismHost>
<organismHost>
    <name type="scientific">Sus scrofa</name>
    <name type="common">Pig</name>
    <dbReference type="NCBI Taxonomy" id="9823"/>
</organismHost>
<name>M1_I89A2</name>
<proteinExistence type="inferred from homology"/>
<reference key="1">
    <citation type="submission" date="2001-07" db="EMBL/GenBank/DDBJ databases">
        <authorList>
            <person name="Zhang Y."/>
            <person name="Wang Y."/>
            <person name="Gilmore X."/>
            <person name="Mbawuike I.N."/>
        </authorList>
    </citation>
    <scope>NUCLEOTIDE SEQUENCE [GENOMIC RNA]</scope>
</reference>
<feature type="chain" id="PRO_0000326330" description="Matrix protein 1">
    <location>
        <begin position="1"/>
        <end position="252"/>
    </location>
</feature>
<feature type="region of interest" description="Membrane-binding" evidence="1">
    <location>
        <begin position="1"/>
        <end position="164"/>
    </location>
</feature>
<feature type="region of interest" description="RNP-binding" evidence="1">
    <location>
        <begin position="165"/>
        <end position="252"/>
    </location>
</feature>
<feature type="short sequence motif" description="Nuclear localization signal" evidence="1">
    <location>
        <begin position="101"/>
        <end position="105"/>
    </location>
</feature>
<protein>
    <recommendedName>
        <fullName evidence="1">Matrix protein 1</fullName>
        <shortName evidence="1">M1</shortName>
    </recommendedName>
</protein>
<accession>Q77GW1</accession>
<comment type="function">
    <text evidence="1">Plays critical roles in virus replication, from virus entry and uncoating to assembly and budding of the virus particle. M1 binding to ribonucleocapsids (RNPs) in nucleus seems to inhibit viral transcription. Interaction of viral NEP with M1-RNP is thought to promote nuclear export of the complex, which is targeted to the virion assembly site at the apical plasma membrane in polarized epithelial cells. Interactions with NA and HA may bring M1, a non-raft-associated protein, into lipid rafts. Forms a continuous shell on the inner side of the lipid bilayer in virion, where it binds the RNP. During virus entry into cell, the M2 ion channel acidifies the internal virion core, inducing M1 dissociation from the RNP. M1-free RNPs are transported to the nucleus, where viral transcription and replication can take place.</text>
</comment>
<comment type="function">
    <text evidence="1">Determines the virion's shape: spherical or filamentous. Clinical isolates of influenza are characterized by the presence of significant proportion of filamentous virions, whereas after multiple passage on eggs or cell culture, virions have only spherical morphology. Filamentous virions are thought to be important to infect neighboring cells, and spherical virions more suited to spread through aerosol between hosts organisms.</text>
</comment>
<comment type="subunit">
    <text evidence="1">Homodimer and homomultimer. Interacts with NEP. Binds ribonucleocapsid by both interacting with genomic RNA and NP protein. May interact with HA and NA. Cannot bind NP without genomic RNA.</text>
</comment>
<comment type="subcellular location">
    <subcellularLocation>
        <location evidence="1">Virion membrane</location>
        <topology evidence="1">Peripheral membrane protein</topology>
        <orientation evidence="1">Cytoplasmic side</orientation>
    </subcellularLocation>
    <subcellularLocation>
        <location evidence="1">Host nucleus</location>
    </subcellularLocation>
</comment>
<comment type="alternative products">
    <event type="alternative splicing"/>
    <isoform>
        <id>Q77GW1-1</id>
        <name>M1</name>
        <sequence type="displayed"/>
    </isoform>
    <isoform>
        <id>Q77GW2-1</id>
        <name>M2</name>
        <sequence type="external"/>
    </isoform>
    <text>Only the first 9 residues are shared by the 2 isoforms.</text>
</comment>
<comment type="miscellaneous">
    <text evidence="1">Most abundant protein in virion. When expressed alone can form virus-like particles in transfected cells.</text>
</comment>
<comment type="similarity">
    <text evidence="1">Belongs to the influenza viruses Matrix protein M1 family.</text>
</comment>
<dbReference type="EMBL" id="AF401293">
    <property type="protein sequence ID" value="AAK91756.1"/>
    <property type="molecule type" value="Genomic_RNA"/>
</dbReference>
<dbReference type="SMR" id="Q77GW1"/>
<dbReference type="GO" id="GO:0042025">
    <property type="term" value="C:host cell nucleus"/>
    <property type="evidence" value="ECO:0007669"/>
    <property type="project" value="UniProtKB-SubCell"/>
</dbReference>
<dbReference type="GO" id="GO:0016020">
    <property type="term" value="C:membrane"/>
    <property type="evidence" value="ECO:0007669"/>
    <property type="project" value="UniProtKB-KW"/>
</dbReference>
<dbReference type="GO" id="GO:0055036">
    <property type="term" value="C:virion membrane"/>
    <property type="evidence" value="ECO:0007669"/>
    <property type="project" value="UniProtKB-SubCell"/>
</dbReference>
<dbReference type="GO" id="GO:0003723">
    <property type="term" value="F:RNA binding"/>
    <property type="evidence" value="ECO:0007669"/>
    <property type="project" value="UniProtKB-UniRule"/>
</dbReference>
<dbReference type="GO" id="GO:0039660">
    <property type="term" value="F:structural constituent of virion"/>
    <property type="evidence" value="ECO:0007669"/>
    <property type="project" value="UniProtKB-UniRule"/>
</dbReference>
<dbReference type="GO" id="GO:0046761">
    <property type="term" value="P:viral budding from plasma membrane"/>
    <property type="evidence" value="ECO:0007669"/>
    <property type="project" value="UniProtKB-UniRule"/>
</dbReference>
<dbReference type="FunFam" id="1.10.10.180:FF:000001">
    <property type="entry name" value="Matrix protein 1"/>
    <property type="match status" value="1"/>
</dbReference>
<dbReference type="FunFam" id="1.20.91.10:FF:000001">
    <property type="entry name" value="Matrix protein 1"/>
    <property type="match status" value="1"/>
</dbReference>
<dbReference type="Gene3D" id="1.10.10.180">
    <property type="match status" value="1"/>
</dbReference>
<dbReference type="Gene3D" id="1.20.91.10">
    <property type="match status" value="1"/>
</dbReference>
<dbReference type="HAMAP" id="MF_04068">
    <property type="entry name" value="INFV_M1"/>
    <property type="match status" value="1"/>
</dbReference>
<dbReference type="InterPro" id="IPR036039">
    <property type="entry name" value="Flu_matrix_M1"/>
</dbReference>
<dbReference type="InterPro" id="IPR013188">
    <property type="entry name" value="Flu_matrix_M1_C"/>
</dbReference>
<dbReference type="InterPro" id="IPR001561">
    <property type="entry name" value="Flu_matrix_M1_N"/>
</dbReference>
<dbReference type="InterPro" id="IPR015423">
    <property type="entry name" value="Flu_matrix_M1_N_sub1"/>
</dbReference>
<dbReference type="InterPro" id="IPR015799">
    <property type="entry name" value="Flu_matrix_M1_N_sub2"/>
</dbReference>
<dbReference type="InterPro" id="IPR037533">
    <property type="entry name" value="INFV_M1"/>
</dbReference>
<dbReference type="Pfam" id="PF00598">
    <property type="entry name" value="Flu_M1"/>
    <property type="match status" value="1"/>
</dbReference>
<dbReference type="Pfam" id="PF08289">
    <property type="entry name" value="Flu_M1_C"/>
    <property type="match status" value="1"/>
</dbReference>
<dbReference type="SMART" id="SM00759">
    <property type="entry name" value="Flu_M1_C"/>
    <property type="match status" value="1"/>
</dbReference>
<dbReference type="SUPFAM" id="SSF48145">
    <property type="entry name" value="Influenza virus matrix protein M1"/>
    <property type="match status" value="1"/>
</dbReference>
<gene>
    <name evidence="1" type="primary">M</name>
</gene>